<comment type="function">
    <text evidence="1">This is one of the proteins that bind and probably mediate the attachment of the 5S RNA into the large ribosomal subunit, where it forms part of the central protuberance. In the 70S ribosome it contacts protein S13 of the 30S subunit (bridge B1b), connecting the 2 subunits; this bridge is implicated in subunit movement. Contacts the P site tRNA; the 5S rRNA and some of its associated proteins might help stabilize positioning of ribosome-bound tRNAs.</text>
</comment>
<comment type="subunit">
    <text evidence="1">Part of the 50S ribosomal subunit; part of the 5S rRNA/L5/L18/L25 subcomplex. Contacts the 5S rRNA and the P site tRNA. Forms a bridge to the 30S subunit in the 70S ribosome.</text>
</comment>
<comment type="similarity">
    <text evidence="1">Belongs to the universal ribosomal protein uL5 family.</text>
</comment>
<gene>
    <name evidence="1" type="primary">rplE</name>
    <name type="ordered locus">TM_1488</name>
</gene>
<feature type="chain" id="PRO_0000125012" description="Large ribosomal subunit protein uL5">
    <location>
        <begin position="1"/>
        <end position="184"/>
    </location>
</feature>
<feature type="sequence conflict" description="In Ref. 1; CAA79789." evidence="2" ref="1">
    <original>F</original>
    <variation>L</variation>
    <location>
        <position position="24"/>
    </location>
</feature>
<feature type="sequence conflict" description="In Ref. 1; CAA79789." evidence="2" ref="1">
    <original>N</original>
    <variation>S</variation>
    <location>
        <position position="102"/>
    </location>
</feature>
<feature type="sequence conflict" description="In Ref. 1; CAA79789." evidence="2" ref="1">
    <original>N</original>
    <variation>D</variation>
    <location>
        <position position="146"/>
    </location>
</feature>
<feature type="sequence conflict" description="In Ref. 1; CAA79789." evidence="2" ref="1">
    <original>A</original>
    <variation>V</variation>
    <location>
        <position position="170"/>
    </location>
</feature>
<sequence>MRYEYVPLKDQYEKEIVPALMKEFNYKNIHQVPKLVKIVINMGIGEGSRNYDLIERHANELAKITGQKPIVTRARKSISNFKIRKGMPIGLKVTLRGARMYNFLYKLINIVLPKVRDFRGLDPNSFDGRGNYSFGLSEQLVFPELNPDEVRRIQGMDITIVTTAKTDQEARRLLELFGMPFKRG</sequence>
<organism>
    <name type="scientific">Thermotoga maritima (strain ATCC 43589 / DSM 3109 / JCM 10099 / NBRC 100826 / MSB8)</name>
    <dbReference type="NCBI Taxonomy" id="243274"/>
    <lineage>
        <taxon>Bacteria</taxon>
        <taxon>Thermotogati</taxon>
        <taxon>Thermotogota</taxon>
        <taxon>Thermotogae</taxon>
        <taxon>Thermotogales</taxon>
        <taxon>Thermotogaceae</taxon>
        <taxon>Thermotoga</taxon>
    </lineage>
</organism>
<keyword id="KW-1185">Reference proteome</keyword>
<keyword id="KW-0687">Ribonucleoprotein</keyword>
<keyword id="KW-0689">Ribosomal protein</keyword>
<keyword id="KW-0694">RNA-binding</keyword>
<keyword id="KW-0699">rRNA-binding</keyword>
<keyword id="KW-0820">tRNA-binding</keyword>
<proteinExistence type="inferred from homology"/>
<name>RL5_THEMA</name>
<evidence type="ECO:0000255" key="1">
    <source>
        <dbReference type="HAMAP-Rule" id="MF_01333"/>
    </source>
</evidence>
<evidence type="ECO:0000305" key="2"/>
<protein>
    <recommendedName>
        <fullName evidence="1">Large ribosomal subunit protein uL5</fullName>
    </recommendedName>
    <alternativeName>
        <fullName evidence="2">50S ribosomal protein L5</fullName>
    </alternativeName>
</protein>
<accession>P38517</accession>
<reference key="1">
    <citation type="journal article" date="1994" name="J. Bacteriol.">
        <title>Phylogenetic depth of S10 and spc operons: cloning and sequencing of a ribosomal protein gene cluster from the extremely thermophilic bacterium Thermotoga maritima.</title>
        <authorList>
            <person name="Sanangelantoni A.M."/>
            <person name="Bocchetta M."/>
            <person name="Cammarano P."/>
            <person name="Tiboni O."/>
        </authorList>
    </citation>
    <scope>NUCLEOTIDE SEQUENCE [GENOMIC DNA]</scope>
    <source>
        <strain>ATCC 43589 / DSM 3109 / JCM 10099 / NBRC 100826 / MSB8</strain>
    </source>
</reference>
<reference key="2">
    <citation type="submission" date="1998-12" db="EMBL/GenBank/DDBJ databases">
        <authorList>
            <person name="Sanangelantoni A.M."/>
        </authorList>
    </citation>
    <scope>SEQUENCE REVISION TO 158</scope>
</reference>
<reference key="3">
    <citation type="journal article" date="1999" name="Nature">
        <title>Evidence for lateral gene transfer between Archaea and Bacteria from genome sequence of Thermotoga maritima.</title>
        <authorList>
            <person name="Nelson K.E."/>
            <person name="Clayton R.A."/>
            <person name="Gill S.R."/>
            <person name="Gwinn M.L."/>
            <person name="Dodson R.J."/>
            <person name="Haft D.H."/>
            <person name="Hickey E.K."/>
            <person name="Peterson J.D."/>
            <person name="Nelson W.C."/>
            <person name="Ketchum K.A."/>
            <person name="McDonald L.A."/>
            <person name="Utterback T.R."/>
            <person name="Malek J.A."/>
            <person name="Linher K.D."/>
            <person name="Garrett M.M."/>
            <person name="Stewart A.M."/>
            <person name="Cotton M.D."/>
            <person name="Pratt M.S."/>
            <person name="Phillips C.A."/>
            <person name="Richardson D.L."/>
            <person name="Heidelberg J.F."/>
            <person name="Sutton G.G."/>
            <person name="Fleischmann R.D."/>
            <person name="Eisen J.A."/>
            <person name="White O."/>
            <person name="Salzberg S.L."/>
            <person name="Smith H.O."/>
            <person name="Venter J.C."/>
            <person name="Fraser C.M."/>
        </authorList>
    </citation>
    <scope>NUCLEOTIDE SEQUENCE [LARGE SCALE GENOMIC DNA]</scope>
    <source>
        <strain>ATCC 43589 / DSM 3109 / JCM 10099 / NBRC 100826 / MSB8</strain>
    </source>
</reference>
<dbReference type="EMBL" id="Z21677">
    <property type="protein sequence ID" value="CAA79789.1"/>
    <property type="molecule type" value="Genomic_DNA"/>
</dbReference>
<dbReference type="EMBL" id="AE000512">
    <property type="protein sequence ID" value="AAD36554.1"/>
    <property type="molecule type" value="Genomic_DNA"/>
</dbReference>
<dbReference type="PIR" id="H72248">
    <property type="entry name" value="H72248"/>
</dbReference>
<dbReference type="RefSeq" id="NP_229288.1">
    <property type="nucleotide sequence ID" value="NC_000853.1"/>
</dbReference>
<dbReference type="RefSeq" id="WP_004081811.1">
    <property type="nucleotide sequence ID" value="NC_000853.1"/>
</dbReference>
<dbReference type="SMR" id="P38517"/>
<dbReference type="FunCoup" id="P38517">
    <property type="interactions" value="384"/>
</dbReference>
<dbReference type="STRING" id="243274.TM_1488"/>
<dbReference type="PaxDb" id="243274-THEMA_06860"/>
<dbReference type="EnsemblBacteria" id="AAD36554">
    <property type="protein sequence ID" value="AAD36554"/>
    <property type="gene ID" value="TM_1488"/>
</dbReference>
<dbReference type="KEGG" id="tma:TM1488"/>
<dbReference type="KEGG" id="tmi:THEMA_06860"/>
<dbReference type="KEGG" id="tmm:Tmari_1496"/>
<dbReference type="KEGG" id="tmw:THMA_1520"/>
<dbReference type="eggNOG" id="COG0094">
    <property type="taxonomic scope" value="Bacteria"/>
</dbReference>
<dbReference type="InParanoid" id="P38517"/>
<dbReference type="OrthoDB" id="9806626at2"/>
<dbReference type="Proteomes" id="UP000008183">
    <property type="component" value="Chromosome"/>
</dbReference>
<dbReference type="GO" id="GO:0022625">
    <property type="term" value="C:cytosolic large ribosomal subunit"/>
    <property type="evidence" value="ECO:0000318"/>
    <property type="project" value="GO_Central"/>
</dbReference>
<dbReference type="GO" id="GO:0003723">
    <property type="term" value="F:RNA binding"/>
    <property type="evidence" value="ECO:0000318"/>
    <property type="project" value="GO_Central"/>
</dbReference>
<dbReference type="GO" id="GO:0019843">
    <property type="term" value="F:rRNA binding"/>
    <property type="evidence" value="ECO:0007669"/>
    <property type="project" value="UniProtKB-UniRule"/>
</dbReference>
<dbReference type="GO" id="GO:0003735">
    <property type="term" value="F:structural constituent of ribosome"/>
    <property type="evidence" value="ECO:0000318"/>
    <property type="project" value="GO_Central"/>
</dbReference>
<dbReference type="GO" id="GO:0000049">
    <property type="term" value="F:tRNA binding"/>
    <property type="evidence" value="ECO:0007669"/>
    <property type="project" value="UniProtKB-UniRule"/>
</dbReference>
<dbReference type="GO" id="GO:0006412">
    <property type="term" value="P:translation"/>
    <property type="evidence" value="ECO:0000318"/>
    <property type="project" value="GO_Central"/>
</dbReference>
<dbReference type="FunFam" id="3.30.1440.10:FF:000001">
    <property type="entry name" value="50S ribosomal protein L5"/>
    <property type="match status" value="1"/>
</dbReference>
<dbReference type="Gene3D" id="3.30.1440.10">
    <property type="match status" value="1"/>
</dbReference>
<dbReference type="HAMAP" id="MF_01333_B">
    <property type="entry name" value="Ribosomal_uL5_B"/>
    <property type="match status" value="1"/>
</dbReference>
<dbReference type="InterPro" id="IPR002132">
    <property type="entry name" value="Ribosomal_uL5"/>
</dbReference>
<dbReference type="InterPro" id="IPR020930">
    <property type="entry name" value="Ribosomal_uL5_bac-type"/>
</dbReference>
<dbReference type="InterPro" id="IPR031309">
    <property type="entry name" value="Ribosomal_uL5_C"/>
</dbReference>
<dbReference type="InterPro" id="IPR020929">
    <property type="entry name" value="Ribosomal_uL5_CS"/>
</dbReference>
<dbReference type="InterPro" id="IPR022803">
    <property type="entry name" value="Ribosomal_uL5_dom_sf"/>
</dbReference>
<dbReference type="InterPro" id="IPR031310">
    <property type="entry name" value="Ribosomal_uL5_N"/>
</dbReference>
<dbReference type="NCBIfam" id="NF000585">
    <property type="entry name" value="PRK00010.1"/>
    <property type="match status" value="1"/>
</dbReference>
<dbReference type="PANTHER" id="PTHR11994">
    <property type="entry name" value="60S RIBOSOMAL PROTEIN L11-RELATED"/>
    <property type="match status" value="1"/>
</dbReference>
<dbReference type="Pfam" id="PF00281">
    <property type="entry name" value="Ribosomal_L5"/>
    <property type="match status" value="1"/>
</dbReference>
<dbReference type="Pfam" id="PF00673">
    <property type="entry name" value="Ribosomal_L5_C"/>
    <property type="match status" value="1"/>
</dbReference>
<dbReference type="PIRSF" id="PIRSF002161">
    <property type="entry name" value="Ribosomal_L5"/>
    <property type="match status" value="1"/>
</dbReference>
<dbReference type="SUPFAM" id="SSF55282">
    <property type="entry name" value="RL5-like"/>
    <property type="match status" value="1"/>
</dbReference>
<dbReference type="PROSITE" id="PS00358">
    <property type="entry name" value="RIBOSOMAL_L5"/>
    <property type="match status" value="1"/>
</dbReference>